<evidence type="ECO:0000250" key="1">
    <source>
        <dbReference type="UniProtKB" id="Q99829"/>
    </source>
</evidence>
<evidence type="ECO:0000250" key="2">
    <source>
        <dbReference type="UniProtKB" id="Q9Z140"/>
    </source>
</evidence>
<evidence type="ECO:0000255" key="3">
    <source>
        <dbReference type="PROSITE-ProRule" id="PRU00041"/>
    </source>
</evidence>
<evidence type="ECO:0000255" key="4">
    <source>
        <dbReference type="PROSITE-ProRule" id="PRU00219"/>
    </source>
</evidence>
<evidence type="ECO:0000269" key="5">
    <source>
    </source>
</evidence>
<evidence type="ECO:0000269" key="6">
    <source>
    </source>
</evidence>
<evidence type="ECO:0000269" key="7">
    <source>
    </source>
</evidence>
<evidence type="ECO:0000269" key="8">
    <source>
    </source>
</evidence>
<evidence type="ECO:0000269" key="9">
    <source>
    </source>
</evidence>
<evidence type="ECO:0000303" key="10">
    <source>
    </source>
</evidence>
<evidence type="ECO:0000303" key="11">
    <source>
    </source>
</evidence>
<evidence type="ECO:0000305" key="12"/>
<evidence type="ECO:0000312" key="13">
    <source>
        <dbReference type="HGNC" id="HGNC:2319"/>
    </source>
</evidence>
<comment type="function">
    <text evidence="2 8">Calcium-dependent phospholipid-binding protein that plays a role in calcium-mediated intracellular processes. Binds phospholipid membranes in a calcium-dependent manner (By similarity). Plays a role in dendrite formation by melanocytes (PubMed:23999003).</text>
</comment>
<comment type="cofactor">
    <cofactor evidence="3">
        <name>Ca(2+)</name>
        <dbReference type="ChEBI" id="CHEBI:29108"/>
    </cofactor>
</comment>
<comment type="subunit">
    <text evidence="2 6">Interacts (via second C2 domain) with OS9 (via C-terminus); this interaction occurs in a calcium-dependent manner in vitro (By similarity). May interact with NECAB1 (PubMed:12044471).</text>
</comment>
<comment type="interaction">
    <interactant intactId="EBI-719005">
        <id>O95741</id>
    </interactant>
    <interactant intactId="EBI-748397">
        <id>P50222</id>
        <label>MEOX2</label>
    </interactant>
    <organismsDiffer>false</organismsDiffer>
    <experiments>3</experiments>
</comment>
<comment type="interaction">
    <interactant intactId="EBI-13312079">
        <id>O95741-2</id>
    </interactant>
    <interactant intactId="EBI-712648">
        <id>O95994</id>
        <label>AGR2</label>
    </interactant>
    <organismsDiffer>false</organismsDiffer>
    <experiments>5</experiments>
</comment>
<comment type="subcellular location">
    <subcellularLocation>
        <location evidence="2">Cytoplasm</location>
    </subcellularLocation>
    <subcellularLocation>
        <location evidence="2">Cell membrane</location>
    </subcellularLocation>
    <subcellularLocation>
        <location evidence="2">Endosome</location>
    </subcellularLocation>
    <subcellularLocation>
        <location evidence="2">Cytoplasmic vesicle</location>
        <location evidence="2">Clathrin-coated vesicle</location>
    </subcellularLocation>
    <subcellularLocation>
        <location evidence="2">Perikaryon</location>
    </subcellularLocation>
    <subcellularLocation>
        <location evidence="2">Cell projection</location>
        <location evidence="2">Dendrite</location>
    </subcellularLocation>
    <text evidence="2">Mainly cytoplasmic in absence of calcium. Associated predominantly with membranes in presence of calcium. Translocates to the cell membrane in a calcium-dependent manner. Colocalized with transferrin in intracellular clathrin-coated membrane vesicles in a calcium-dependent manner.</text>
</comment>
<comment type="alternative products">
    <event type="alternative splicing"/>
    <isoform>
        <id>O95741-1</id>
        <name>1</name>
        <sequence type="displayed"/>
    </isoform>
    <isoform>
        <id>O95741-2</id>
        <name>2</name>
        <sequence type="described" ref="VSP_054806"/>
    </isoform>
</comment>
<comment type="tissue specificity">
    <text evidence="5 7 8 9">Widely expressed in the brain (PubMed:10403379, PubMed:12949241, PubMed:9645480). Expressed weakly in the kidney, liver and fetal heart (PubMed:12949241). Expressed in melanocytes (PubMed:23999003).</text>
</comment>
<comment type="domain">
    <text evidence="2">The C2 domain 1 binds phospholipids in a calcium-independent manner and is not necessary for calcium-mediated translocation and association to the plasma membrane. The C2 domain 2 binds phospholipids in a calcium-dependent manner and is necessary for calcium-mediated translocation and association to the plasma membrane. The linker region contributes to the calcium-dependent translocation and association to the plasma membrane. The VWFA domain is necessary for association with intracellular clathrin-coated vesicles in a calcium-dependent manner.</text>
</comment>
<comment type="similarity">
    <text evidence="12">Belongs to the copine family.</text>
</comment>
<protein>
    <recommendedName>
        <fullName evidence="12">Copine-6</fullName>
    </recommendedName>
    <alternativeName>
        <fullName evidence="1 13">Copine VI</fullName>
    </alternativeName>
    <alternativeName>
        <fullName evidence="11">Neuronal-copine</fullName>
        <shortName evidence="11">N-copine</shortName>
    </alternativeName>
</protein>
<sequence length="557" mass="61991">MSDPEMGWVPEPPTMTLGASRVELRVSCHGLLDRDTLTKPHPCVLLKLYSDEQWVEVERTEVLRSCSSPVFSRVLALEYFFEEKQPLQFHVFDAEDGATSPRNDTFLGSTECTLGQIVSQTKVTKPLLLKNGKTAGKSTITIVAEEVSGTNDYVQLTFRAYKLDNKDLFSKSDPFMEIYKTNEDQSDQLVWRTEVVKNNLNPSWEPFRLSLHSLCSCDVHRPLKFLVYDYDSSGKHDFIGEFTSTFQEMQEGTANPGQEMQWDCINPKYRDKKKNYKSSGTVVLAQCTVEKVHTFLDYIMGGCQISFTVAIDFTASNGDPRSSQSLHCLSPRQPNHYLQALRAVGGICQDYDSDKRFPAFGFGARIPPNFEVSHDFAINFDPENPECEEISGVIASYRRCLPQIQLYGPTNVAPIINRVAEPAQREQSTGQATKYSVLLVLTDGVVSDMAETRTAIVRASRLPMSIIIVGVGNADFSDMRLLDGDDGPLRCPRGVPAARDIVQFVPFRDFKDAAPSALAKCVLAEVPRQVVEYYASQGISPGAPRPCTLATTPSPSP</sequence>
<feature type="chain" id="PRO_0000144845" description="Copine-6">
    <location>
        <begin position="1"/>
        <end position="557"/>
    </location>
</feature>
<feature type="domain" description="C2 1" evidence="3">
    <location>
        <begin position="2"/>
        <end position="127"/>
    </location>
</feature>
<feature type="domain" description="C2 2" evidence="3">
    <location>
        <begin position="134"/>
        <end position="263"/>
    </location>
</feature>
<feature type="domain" description="VWFA" evidence="4">
    <location>
        <begin position="306"/>
        <end position="526"/>
    </location>
</feature>
<feature type="region of interest" description="Linker region" evidence="2">
    <location>
        <begin position="244"/>
        <end position="303"/>
    </location>
</feature>
<feature type="binding site" evidence="3">
    <location>
        <position position="167"/>
    </location>
    <ligand>
        <name>Ca(2+)</name>
        <dbReference type="ChEBI" id="CHEBI:29108"/>
        <label>1</label>
    </ligand>
</feature>
<feature type="binding site" evidence="3">
    <location>
        <position position="167"/>
    </location>
    <ligand>
        <name>Ca(2+)</name>
        <dbReference type="ChEBI" id="CHEBI:29108"/>
        <label>2</label>
    </ligand>
</feature>
<feature type="binding site" evidence="3">
    <location>
        <position position="173"/>
    </location>
    <ligand>
        <name>Ca(2+)</name>
        <dbReference type="ChEBI" id="CHEBI:29108"/>
        <label>1</label>
    </ligand>
</feature>
<feature type="binding site" evidence="3">
    <location>
        <position position="229"/>
    </location>
    <ligand>
        <name>Ca(2+)</name>
        <dbReference type="ChEBI" id="CHEBI:29108"/>
        <label>1</label>
    </ligand>
</feature>
<feature type="binding site" evidence="3">
    <location>
        <position position="229"/>
    </location>
    <ligand>
        <name>Ca(2+)</name>
        <dbReference type="ChEBI" id="CHEBI:29108"/>
        <label>2</label>
    </ligand>
</feature>
<feature type="binding site" evidence="3">
    <location>
        <position position="231"/>
    </location>
    <ligand>
        <name>Ca(2+)</name>
        <dbReference type="ChEBI" id="CHEBI:29108"/>
        <label>1</label>
    </ligand>
</feature>
<feature type="binding site" evidence="3">
    <location>
        <position position="231"/>
    </location>
    <ligand>
        <name>Ca(2+)</name>
        <dbReference type="ChEBI" id="CHEBI:29108"/>
        <label>2</label>
    </ligand>
</feature>
<feature type="binding site" evidence="3">
    <location>
        <position position="237"/>
    </location>
    <ligand>
        <name>Ca(2+)</name>
        <dbReference type="ChEBI" id="CHEBI:29108"/>
        <label>2</label>
    </ligand>
</feature>
<feature type="splice variant" id="VSP_054806" description="In isoform 2." evidence="10">
    <original>M</original>
    <variation>MAFKEHGKITSCCIPGPINSSRAGAGAGASGWSSKGVRARAREPERGAPDREPSDM</variation>
    <location>
        <position position="1"/>
    </location>
</feature>
<feature type="sequence conflict" description="In Ref. 6; AAH18046." evidence="12" ref="6">
    <original>P</original>
    <variation>Q</variation>
    <location>
        <position position="13"/>
    </location>
</feature>
<feature type="sequence conflict" description="In Ref. 6; AAH18046." evidence="12" ref="6">
    <original>L</original>
    <variation>V</variation>
    <location>
        <position position="87"/>
    </location>
</feature>
<feature type="sequence conflict" description="In Ref. 2; BAH11559." evidence="12" ref="2">
    <original>N</original>
    <variation>S</variation>
    <location>
        <position position="198"/>
    </location>
</feature>
<feature type="sequence conflict" description="In Ref. 3; BAD96395." evidence="12" ref="3">
    <original>P</original>
    <variation>H</variation>
    <location>
        <position position="331"/>
    </location>
</feature>
<keyword id="KW-0025">Alternative splicing</keyword>
<keyword id="KW-0106">Calcium</keyword>
<keyword id="KW-1003">Cell membrane</keyword>
<keyword id="KW-0966">Cell projection</keyword>
<keyword id="KW-0963">Cytoplasm</keyword>
<keyword id="KW-0968">Cytoplasmic vesicle</keyword>
<keyword id="KW-0221">Differentiation</keyword>
<keyword id="KW-0967">Endosome</keyword>
<keyword id="KW-0472">Membrane</keyword>
<keyword id="KW-0479">Metal-binding</keyword>
<keyword id="KW-1267">Proteomics identification</keyword>
<keyword id="KW-1185">Reference proteome</keyword>
<keyword id="KW-0677">Repeat</keyword>
<accession>O95741</accession>
<accession>B2RAG6</accession>
<accession>B7Z1M3</accession>
<accession>D3DS55</accession>
<accession>F5GXN1</accession>
<accession>Q53HA6</accession>
<accession>Q8WVG1</accession>
<dbReference type="EMBL" id="AB009288">
    <property type="protein sequence ID" value="BAA75899.1"/>
    <property type="molecule type" value="mRNA"/>
</dbReference>
<dbReference type="EMBL" id="AK222675">
    <property type="protein sequence ID" value="BAD96395.1"/>
    <property type="molecule type" value="mRNA"/>
</dbReference>
<dbReference type="EMBL" id="AK314182">
    <property type="protein sequence ID" value="BAG36863.1"/>
    <property type="molecule type" value="mRNA"/>
</dbReference>
<dbReference type="EMBL" id="AK293655">
    <property type="protein sequence ID" value="BAH11559.1"/>
    <property type="molecule type" value="mRNA"/>
</dbReference>
<dbReference type="EMBL" id="AL136295">
    <property type="status" value="NOT_ANNOTATED_CDS"/>
    <property type="molecule type" value="Genomic_DNA"/>
</dbReference>
<dbReference type="EMBL" id="CH471078">
    <property type="protein sequence ID" value="EAW66119.1"/>
    <property type="molecule type" value="Genomic_DNA"/>
</dbReference>
<dbReference type="EMBL" id="CH471078">
    <property type="protein sequence ID" value="EAW66120.1"/>
    <property type="molecule type" value="Genomic_DNA"/>
</dbReference>
<dbReference type="EMBL" id="BC018046">
    <property type="protein sequence ID" value="AAH18046.1"/>
    <property type="molecule type" value="mRNA"/>
</dbReference>
<dbReference type="CCDS" id="CCDS61413.1">
    <molecule id="O95741-2"/>
</dbReference>
<dbReference type="CCDS" id="CCDS9607.1">
    <molecule id="O95741-1"/>
</dbReference>
<dbReference type="RefSeq" id="NP_001267487.1">
    <molecule id="O95741-2"/>
    <property type="nucleotide sequence ID" value="NM_001280558.2"/>
</dbReference>
<dbReference type="RefSeq" id="NP_001371985.1">
    <molecule id="O95741-1"/>
    <property type="nucleotide sequence ID" value="NM_001385056.1"/>
</dbReference>
<dbReference type="RefSeq" id="NP_001371986.1">
    <molecule id="O95741-1"/>
    <property type="nucleotide sequence ID" value="NM_001385057.1"/>
</dbReference>
<dbReference type="RefSeq" id="NP_001371987.1">
    <molecule id="O95741-1"/>
    <property type="nucleotide sequence ID" value="NM_001385058.1"/>
</dbReference>
<dbReference type="RefSeq" id="NP_006023.1">
    <molecule id="O95741-1"/>
    <property type="nucleotide sequence ID" value="NM_006032.4"/>
</dbReference>
<dbReference type="RefSeq" id="XP_005268273.1">
    <property type="nucleotide sequence ID" value="XM_005268216.1"/>
</dbReference>
<dbReference type="SMR" id="O95741"/>
<dbReference type="BioGRID" id="114763">
    <property type="interactions" value="16"/>
</dbReference>
<dbReference type="FunCoup" id="O95741">
    <property type="interactions" value="100"/>
</dbReference>
<dbReference type="IntAct" id="O95741">
    <property type="interactions" value="16"/>
</dbReference>
<dbReference type="MINT" id="O95741"/>
<dbReference type="STRING" id="9606.ENSP00000440077"/>
<dbReference type="iPTMnet" id="O95741"/>
<dbReference type="PhosphoSitePlus" id="O95741"/>
<dbReference type="SwissPalm" id="O95741"/>
<dbReference type="BioMuta" id="CPNE6"/>
<dbReference type="jPOST" id="O95741"/>
<dbReference type="MassIVE" id="O95741"/>
<dbReference type="PaxDb" id="9606-ENSP00000440077"/>
<dbReference type="PeptideAtlas" id="O95741"/>
<dbReference type="ProteomicsDB" id="24474"/>
<dbReference type="ProteomicsDB" id="51017">
    <molecule id="O95741-1"/>
</dbReference>
<dbReference type="Antibodypedia" id="22599">
    <property type="antibodies" value="164 antibodies from 25 providers"/>
</dbReference>
<dbReference type="DNASU" id="9362"/>
<dbReference type="Ensembl" id="ENST00000397016.6">
    <molecule id="O95741-1"/>
    <property type="protein sequence ID" value="ENSP00000380211.2"/>
    <property type="gene ID" value="ENSG00000100884.10"/>
</dbReference>
<dbReference type="Ensembl" id="ENST00000537691.5">
    <molecule id="O95741-2"/>
    <property type="protein sequence ID" value="ENSP00000440077.1"/>
    <property type="gene ID" value="ENSG00000100884.10"/>
</dbReference>
<dbReference type="Ensembl" id="ENST00000645359.1">
    <molecule id="O95741-2"/>
    <property type="protein sequence ID" value="ENSP00000494138.1"/>
    <property type="gene ID" value="ENSG00000285221.1"/>
</dbReference>
<dbReference type="Ensembl" id="ENST00000647071.1">
    <molecule id="O95741-1"/>
    <property type="protein sequence ID" value="ENSP00000494513.1"/>
    <property type="gene ID" value="ENSG00000285221.1"/>
</dbReference>
<dbReference type="Ensembl" id="ENST00000689861.1">
    <molecule id="O95741-1"/>
    <property type="protein sequence ID" value="ENSP00000510387.1"/>
    <property type="gene ID" value="ENSG00000100884.10"/>
</dbReference>
<dbReference type="GeneID" id="9362"/>
<dbReference type="KEGG" id="hsa:9362"/>
<dbReference type="MANE-Select" id="ENST00000689861.1">
    <property type="protein sequence ID" value="ENSP00000510387.1"/>
    <property type="RefSeq nucleotide sequence ID" value="NM_006032.4"/>
    <property type="RefSeq protein sequence ID" value="NP_006023.1"/>
</dbReference>
<dbReference type="UCSC" id="uc010tnv.4">
    <molecule id="O95741-1"/>
    <property type="organism name" value="human"/>
</dbReference>
<dbReference type="AGR" id="HGNC:2319"/>
<dbReference type="CTD" id="9362"/>
<dbReference type="DisGeNET" id="9362"/>
<dbReference type="GeneCards" id="CPNE6"/>
<dbReference type="HGNC" id="HGNC:2319">
    <property type="gene designation" value="CPNE6"/>
</dbReference>
<dbReference type="HPA" id="ENSG00000100884">
    <property type="expression patterns" value="Tissue enriched (brain)"/>
</dbReference>
<dbReference type="MalaCards" id="CPNE6"/>
<dbReference type="MIM" id="605688">
    <property type="type" value="gene"/>
</dbReference>
<dbReference type="neXtProt" id="NX_O95741"/>
<dbReference type="OpenTargets" id="ENSG00000100884"/>
<dbReference type="PharmGKB" id="PA26836"/>
<dbReference type="VEuPathDB" id="HostDB:ENSG00000100884"/>
<dbReference type="eggNOG" id="KOG1327">
    <property type="taxonomic scope" value="Eukaryota"/>
</dbReference>
<dbReference type="GeneTree" id="ENSGT00940000161567"/>
<dbReference type="HOGENOM" id="CLU_020452_4_0_1"/>
<dbReference type="InParanoid" id="O95741"/>
<dbReference type="OMA" id="YKTNRDQ"/>
<dbReference type="OrthoDB" id="5855668at2759"/>
<dbReference type="PAN-GO" id="O95741">
    <property type="GO annotations" value="3 GO annotations based on evolutionary models"/>
</dbReference>
<dbReference type="PhylomeDB" id="O95741"/>
<dbReference type="TreeFam" id="TF316419"/>
<dbReference type="PathwayCommons" id="O95741"/>
<dbReference type="Reactome" id="R-HSA-1483206">
    <property type="pathway name" value="Glycerophospholipid biosynthesis"/>
</dbReference>
<dbReference type="SignaLink" id="O95741"/>
<dbReference type="BioGRID-ORCS" id="9362">
    <property type="hits" value="16 hits in 1143 CRISPR screens"/>
</dbReference>
<dbReference type="CD-CODE" id="FB4E32DD">
    <property type="entry name" value="Presynaptic clusters and postsynaptic densities"/>
</dbReference>
<dbReference type="GeneWiki" id="CPNE6"/>
<dbReference type="GenomeRNAi" id="9362"/>
<dbReference type="Pharos" id="O95741">
    <property type="development level" value="Tbio"/>
</dbReference>
<dbReference type="PRO" id="PR:O95741"/>
<dbReference type="Proteomes" id="UP000005640">
    <property type="component" value="Chromosome 14"/>
</dbReference>
<dbReference type="RNAct" id="O95741">
    <property type="molecule type" value="protein"/>
</dbReference>
<dbReference type="Bgee" id="ENSG00000100884">
    <property type="expression patterns" value="Expressed in temporal lobe and 92 other cell types or tissues"/>
</dbReference>
<dbReference type="ExpressionAtlas" id="O95741">
    <property type="expression patterns" value="baseline and differential"/>
</dbReference>
<dbReference type="GO" id="GO:0030424">
    <property type="term" value="C:axon"/>
    <property type="evidence" value="ECO:0000250"/>
    <property type="project" value="UniProtKB"/>
</dbReference>
<dbReference type="GO" id="GO:0045334">
    <property type="term" value="C:clathrin-coated endocytic vesicle"/>
    <property type="evidence" value="ECO:0007669"/>
    <property type="project" value="Ensembl"/>
</dbReference>
<dbReference type="GO" id="GO:0030425">
    <property type="term" value="C:dendrite"/>
    <property type="evidence" value="ECO:0000250"/>
    <property type="project" value="UniProtKB"/>
</dbReference>
<dbReference type="GO" id="GO:0005768">
    <property type="term" value="C:endosome"/>
    <property type="evidence" value="ECO:0007669"/>
    <property type="project" value="UniProtKB-SubCell"/>
</dbReference>
<dbReference type="GO" id="GO:0070062">
    <property type="term" value="C:extracellular exosome"/>
    <property type="evidence" value="ECO:0007005"/>
    <property type="project" value="UniProtKB"/>
</dbReference>
<dbReference type="GO" id="GO:0016020">
    <property type="term" value="C:membrane"/>
    <property type="evidence" value="ECO:0000250"/>
    <property type="project" value="UniProtKB"/>
</dbReference>
<dbReference type="GO" id="GO:0043204">
    <property type="term" value="C:perikaryon"/>
    <property type="evidence" value="ECO:0007669"/>
    <property type="project" value="UniProtKB-SubCell"/>
</dbReference>
<dbReference type="GO" id="GO:0005886">
    <property type="term" value="C:plasma membrane"/>
    <property type="evidence" value="ECO:0000318"/>
    <property type="project" value="GO_Central"/>
</dbReference>
<dbReference type="GO" id="GO:0005509">
    <property type="term" value="F:calcium ion binding"/>
    <property type="evidence" value="ECO:0000304"/>
    <property type="project" value="ProtInc"/>
</dbReference>
<dbReference type="GO" id="GO:0005544">
    <property type="term" value="F:calcium-dependent phospholipid binding"/>
    <property type="evidence" value="ECO:0000318"/>
    <property type="project" value="GO_Central"/>
</dbReference>
<dbReference type="GO" id="GO:0001786">
    <property type="term" value="F:phosphatidylserine binding"/>
    <property type="evidence" value="ECO:0000250"/>
    <property type="project" value="UniProtKB"/>
</dbReference>
<dbReference type="GO" id="GO:0030154">
    <property type="term" value="P:cell differentiation"/>
    <property type="evidence" value="ECO:0007669"/>
    <property type="project" value="UniProtKB-KW"/>
</dbReference>
<dbReference type="GO" id="GO:0071277">
    <property type="term" value="P:cellular response to calcium ion"/>
    <property type="evidence" value="ECO:0000318"/>
    <property type="project" value="GO_Central"/>
</dbReference>
<dbReference type="GO" id="GO:1903861">
    <property type="term" value="P:positive regulation of dendrite extension"/>
    <property type="evidence" value="ECO:0000314"/>
    <property type="project" value="UniProtKB"/>
</dbReference>
<dbReference type="GO" id="GO:0098974">
    <property type="term" value="P:postsynaptic actin cytoskeleton organization"/>
    <property type="evidence" value="ECO:0007669"/>
    <property type="project" value="Ensembl"/>
</dbReference>
<dbReference type="CDD" id="cd04048">
    <property type="entry name" value="C2A_Copine"/>
    <property type="match status" value="1"/>
</dbReference>
<dbReference type="CDD" id="cd04047">
    <property type="entry name" value="C2B_Copine"/>
    <property type="match status" value="1"/>
</dbReference>
<dbReference type="CDD" id="cd01459">
    <property type="entry name" value="vWA_copine_like"/>
    <property type="match status" value="1"/>
</dbReference>
<dbReference type="FunFam" id="2.60.40.150:FF:000063">
    <property type="entry name" value="Copine 4"/>
    <property type="match status" value="1"/>
</dbReference>
<dbReference type="FunFam" id="2.60.40.150:FF:000126">
    <property type="entry name" value="Copine 6"/>
    <property type="match status" value="1"/>
</dbReference>
<dbReference type="Gene3D" id="2.60.40.150">
    <property type="entry name" value="C2 domain"/>
    <property type="match status" value="2"/>
</dbReference>
<dbReference type="InterPro" id="IPR000008">
    <property type="entry name" value="C2_dom"/>
</dbReference>
<dbReference type="InterPro" id="IPR035892">
    <property type="entry name" value="C2_domain_sf"/>
</dbReference>
<dbReference type="InterPro" id="IPR037768">
    <property type="entry name" value="C2B_Copine"/>
</dbReference>
<dbReference type="InterPro" id="IPR045052">
    <property type="entry name" value="Copine"/>
</dbReference>
<dbReference type="InterPro" id="IPR010734">
    <property type="entry name" value="Copine_C"/>
</dbReference>
<dbReference type="InterPro" id="IPR002035">
    <property type="entry name" value="VWF_A"/>
</dbReference>
<dbReference type="InterPro" id="IPR036465">
    <property type="entry name" value="vWFA_dom_sf"/>
</dbReference>
<dbReference type="PANTHER" id="PTHR10857">
    <property type="entry name" value="COPINE"/>
    <property type="match status" value="1"/>
</dbReference>
<dbReference type="PANTHER" id="PTHR10857:SF5">
    <property type="entry name" value="COPINE-6"/>
    <property type="match status" value="1"/>
</dbReference>
<dbReference type="Pfam" id="PF00168">
    <property type="entry name" value="C2"/>
    <property type="match status" value="2"/>
</dbReference>
<dbReference type="Pfam" id="PF07002">
    <property type="entry name" value="Copine"/>
    <property type="match status" value="1"/>
</dbReference>
<dbReference type="SMART" id="SM00239">
    <property type="entry name" value="C2"/>
    <property type="match status" value="2"/>
</dbReference>
<dbReference type="SMART" id="SM00327">
    <property type="entry name" value="VWA"/>
    <property type="match status" value="1"/>
</dbReference>
<dbReference type="SUPFAM" id="SSF49562">
    <property type="entry name" value="C2 domain (Calcium/lipid-binding domain, CaLB)"/>
    <property type="match status" value="2"/>
</dbReference>
<dbReference type="SUPFAM" id="SSF53300">
    <property type="entry name" value="vWA-like"/>
    <property type="match status" value="1"/>
</dbReference>
<dbReference type="PROSITE" id="PS50004">
    <property type="entry name" value="C2"/>
    <property type="match status" value="2"/>
</dbReference>
<dbReference type="PROSITE" id="PS50234">
    <property type="entry name" value="VWFA"/>
    <property type="match status" value="1"/>
</dbReference>
<proteinExistence type="evidence at protein level"/>
<organism>
    <name type="scientific">Homo sapiens</name>
    <name type="common">Human</name>
    <dbReference type="NCBI Taxonomy" id="9606"/>
    <lineage>
        <taxon>Eukaryota</taxon>
        <taxon>Metazoa</taxon>
        <taxon>Chordata</taxon>
        <taxon>Craniata</taxon>
        <taxon>Vertebrata</taxon>
        <taxon>Euteleostomi</taxon>
        <taxon>Mammalia</taxon>
        <taxon>Eutheria</taxon>
        <taxon>Euarchontoglires</taxon>
        <taxon>Primates</taxon>
        <taxon>Haplorrhini</taxon>
        <taxon>Catarrhini</taxon>
        <taxon>Hominidae</taxon>
        <taxon>Homo</taxon>
    </lineage>
</organism>
<gene>
    <name evidence="13" type="primary">CPNE6</name>
</gene>
<reference key="1">
    <citation type="journal article" date="1998" name="FEBS Lett.">
        <title>N-copine: a novel two C2-domain-containing protein with neuronal activity-regulated expression.</title>
        <authorList>
            <person name="Nakayama T."/>
            <person name="Yaoi T."/>
            <person name="Yasui M."/>
            <person name="Kuwajima G."/>
        </authorList>
    </citation>
    <scope>NUCLEOTIDE SEQUENCE [MRNA] (ISOFORM 1)</scope>
    <scope>TISSUE SPECIFICITY</scope>
    <source>
        <tissue>Brain</tissue>
    </source>
</reference>
<reference key="2">
    <citation type="journal article" date="2004" name="Nat. Genet.">
        <title>Complete sequencing and characterization of 21,243 full-length human cDNAs.</title>
        <authorList>
            <person name="Ota T."/>
            <person name="Suzuki Y."/>
            <person name="Nishikawa T."/>
            <person name="Otsuki T."/>
            <person name="Sugiyama T."/>
            <person name="Irie R."/>
            <person name="Wakamatsu A."/>
            <person name="Hayashi K."/>
            <person name="Sato H."/>
            <person name="Nagai K."/>
            <person name="Kimura K."/>
            <person name="Makita H."/>
            <person name="Sekine M."/>
            <person name="Obayashi M."/>
            <person name="Nishi T."/>
            <person name="Shibahara T."/>
            <person name="Tanaka T."/>
            <person name="Ishii S."/>
            <person name="Yamamoto J."/>
            <person name="Saito K."/>
            <person name="Kawai Y."/>
            <person name="Isono Y."/>
            <person name="Nakamura Y."/>
            <person name="Nagahari K."/>
            <person name="Murakami K."/>
            <person name="Yasuda T."/>
            <person name="Iwayanagi T."/>
            <person name="Wagatsuma M."/>
            <person name="Shiratori A."/>
            <person name="Sudo H."/>
            <person name="Hosoiri T."/>
            <person name="Kaku Y."/>
            <person name="Kodaira H."/>
            <person name="Kondo H."/>
            <person name="Sugawara M."/>
            <person name="Takahashi M."/>
            <person name="Kanda K."/>
            <person name="Yokoi T."/>
            <person name="Furuya T."/>
            <person name="Kikkawa E."/>
            <person name="Omura Y."/>
            <person name="Abe K."/>
            <person name="Kamihara K."/>
            <person name="Katsuta N."/>
            <person name="Sato K."/>
            <person name="Tanikawa M."/>
            <person name="Yamazaki M."/>
            <person name="Ninomiya K."/>
            <person name="Ishibashi T."/>
            <person name="Yamashita H."/>
            <person name="Murakawa K."/>
            <person name="Fujimori K."/>
            <person name="Tanai H."/>
            <person name="Kimata M."/>
            <person name="Watanabe M."/>
            <person name="Hiraoka S."/>
            <person name="Chiba Y."/>
            <person name="Ishida S."/>
            <person name="Ono Y."/>
            <person name="Takiguchi S."/>
            <person name="Watanabe S."/>
            <person name="Yosida M."/>
            <person name="Hotuta T."/>
            <person name="Kusano J."/>
            <person name="Kanehori K."/>
            <person name="Takahashi-Fujii A."/>
            <person name="Hara H."/>
            <person name="Tanase T.-O."/>
            <person name="Nomura Y."/>
            <person name="Togiya S."/>
            <person name="Komai F."/>
            <person name="Hara R."/>
            <person name="Takeuchi K."/>
            <person name="Arita M."/>
            <person name="Imose N."/>
            <person name="Musashino K."/>
            <person name="Yuuki H."/>
            <person name="Oshima A."/>
            <person name="Sasaki N."/>
            <person name="Aotsuka S."/>
            <person name="Yoshikawa Y."/>
            <person name="Matsunawa H."/>
            <person name="Ichihara T."/>
            <person name="Shiohata N."/>
            <person name="Sano S."/>
            <person name="Moriya S."/>
            <person name="Momiyama H."/>
            <person name="Satoh N."/>
            <person name="Takami S."/>
            <person name="Terashima Y."/>
            <person name="Suzuki O."/>
            <person name="Nakagawa S."/>
            <person name="Senoh A."/>
            <person name="Mizoguchi H."/>
            <person name="Goto Y."/>
            <person name="Shimizu F."/>
            <person name="Wakebe H."/>
            <person name="Hishigaki H."/>
            <person name="Watanabe T."/>
            <person name="Sugiyama A."/>
            <person name="Takemoto M."/>
            <person name="Kawakami B."/>
            <person name="Yamazaki M."/>
            <person name="Watanabe K."/>
            <person name="Kumagai A."/>
            <person name="Itakura S."/>
            <person name="Fukuzumi Y."/>
            <person name="Fujimori Y."/>
            <person name="Komiyama M."/>
            <person name="Tashiro H."/>
            <person name="Tanigami A."/>
            <person name="Fujiwara T."/>
            <person name="Ono T."/>
            <person name="Yamada K."/>
            <person name="Fujii Y."/>
            <person name="Ozaki K."/>
            <person name="Hirao M."/>
            <person name="Ohmori Y."/>
            <person name="Kawabata A."/>
            <person name="Hikiji T."/>
            <person name="Kobatake N."/>
            <person name="Inagaki H."/>
            <person name="Ikema Y."/>
            <person name="Okamoto S."/>
            <person name="Okitani R."/>
            <person name="Kawakami T."/>
            <person name="Noguchi S."/>
            <person name="Itoh T."/>
            <person name="Shigeta K."/>
            <person name="Senba T."/>
            <person name="Matsumura K."/>
            <person name="Nakajima Y."/>
            <person name="Mizuno T."/>
            <person name="Morinaga M."/>
            <person name="Sasaki M."/>
            <person name="Togashi T."/>
            <person name="Oyama M."/>
            <person name="Hata H."/>
            <person name="Watanabe M."/>
            <person name="Komatsu T."/>
            <person name="Mizushima-Sugano J."/>
            <person name="Satoh T."/>
            <person name="Shirai Y."/>
            <person name="Takahashi Y."/>
            <person name="Nakagawa K."/>
            <person name="Okumura K."/>
            <person name="Nagase T."/>
            <person name="Nomura N."/>
            <person name="Kikuchi H."/>
            <person name="Masuho Y."/>
            <person name="Yamashita R."/>
            <person name="Nakai K."/>
            <person name="Yada T."/>
            <person name="Nakamura Y."/>
            <person name="Ohara O."/>
            <person name="Isogai T."/>
            <person name="Sugano S."/>
        </authorList>
    </citation>
    <scope>NUCLEOTIDE SEQUENCE [LARGE SCALE MRNA] (ISOFORMS 1 AND 2)</scope>
    <source>
        <tissue>Brain</tissue>
    </source>
</reference>
<reference key="3">
    <citation type="submission" date="2005-04" db="EMBL/GenBank/DDBJ databases">
        <authorList>
            <person name="Suzuki Y."/>
            <person name="Sugano S."/>
            <person name="Totoki Y."/>
            <person name="Toyoda A."/>
            <person name="Takeda T."/>
            <person name="Sakaki Y."/>
            <person name="Tanaka A."/>
            <person name="Yokoyama S."/>
        </authorList>
    </citation>
    <scope>NUCLEOTIDE SEQUENCE [LARGE SCALE MRNA] (ISOFORM 1)</scope>
    <source>
        <tissue>Brain</tissue>
    </source>
</reference>
<reference key="4">
    <citation type="journal article" date="2003" name="Nature">
        <title>The DNA sequence and analysis of human chromosome 14.</title>
        <authorList>
            <person name="Heilig R."/>
            <person name="Eckenberg R."/>
            <person name="Petit J.-L."/>
            <person name="Fonknechten N."/>
            <person name="Da Silva C."/>
            <person name="Cattolico L."/>
            <person name="Levy M."/>
            <person name="Barbe V."/>
            <person name="De Berardinis V."/>
            <person name="Ureta-Vidal A."/>
            <person name="Pelletier E."/>
            <person name="Vico V."/>
            <person name="Anthouard V."/>
            <person name="Rowen L."/>
            <person name="Madan A."/>
            <person name="Qin S."/>
            <person name="Sun H."/>
            <person name="Du H."/>
            <person name="Pepin K."/>
            <person name="Artiguenave F."/>
            <person name="Robert C."/>
            <person name="Cruaud C."/>
            <person name="Bruels T."/>
            <person name="Jaillon O."/>
            <person name="Friedlander L."/>
            <person name="Samson G."/>
            <person name="Brottier P."/>
            <person name="Cure S."/>
            <person name="Segurens B."/>
            <person name="Aniere F."/>
            <person name="Samain S."/>
            <person name="Crespeau H."/>
            <person name="Abbasi N."/>
            <person name="Aiach N."/>
            <person name="Boscus D."/>
            <person name="Dickhoff R."/>
            <person name="Dors M."/>
            <person name="Dubois I."/>
            <person name="Friedman C."/>
            <person name="Gouyvenoux M."/>
            <person name="James R."/>
            <person name="Madan A."/>
            <person name="Mairey-Estrada B."/>
            <person name="Mangenot S."/>
            <person name="Martins N."/>
            <person name="Menard M."/>
            <person name="Oztas S."/>
            <person name="Ratcliffe A."/>
            <person name="Shaffer T."/>
            <person name="Trask B."/>
            <person name="Vacherie B."/>
            <person name="Bellemere C."/>
            <person name="Belser C."/>
            <person name="Besnard-Gonnet M."/>
            <person name="Bartol-Mavel D."/>
            <person name="Boutard M."/>
            <person name="Briez-Silla S."/>
            <person name="Combette S."/>
            <person name="Dufosse-Laurent V."/>
            <person name="Ferron C."/>
            <person name="Lechaplais C."/>
            <person name="Louesse C."/>
            <person name="Muselet D."/>
            <person name="Magdelenat G."/>
            <person name="Pateau E."/>
            <person name="Petit E."/>
            <person name="Sirvain-Trukniewicz P."/>
            <person name="Trybou A."/>
            <person name="Vega-Czarny N."/>
            <person name="Bataille E."/>
            <person name="Bluet E."/>
            <person name="Bordelais I."/>
            <person name="Dubois M."/>
            <person name="Dumont C."/>
            <person name="Guerin T."/>
            <person name="Haffray S."/>
            <person name="Hammadi R."/>
            <person name="Muanga J."/>
            <person name="Pellouin V."/>
            <person name="Robert D."/>
            <person name="Wunderle E."/>
            <person name="Gauguet G."/>
            <person name="Roy A."/>
            <person name="Sainte-Marthe L."/>
            <person name="Verdier J."/>
            <person name="Verdier-Discala C."/>
            <person name="Hillier L.W."/>
            <person name="Fulton L."/>
            <person name="McPherson J."/>
            <person name="Matsuda F."/>
            <person name="Wilson R."/>
            <person name="Scarpelli C."/>
            <person name="Gyapay G."/>
            <person name="Wincker P."/>
            <person name="Saurin W."/>
            <person name="Quetier F."/>
            <person name="Waterston R."/>
            <person name="Hood L."/>
            <person name="Weissenbach J."/>
        </authorList>
    </citation>
    <scope>NUCLEOTIDE SEQUENCE [LARGE SCALE GENOMIC DNA]</scope>
</reference>
<reference key="5">
    <citation type="submission" date="2005-09" db="EMBL/GenBank/DDBJ databases">
        <authorList>
            <person name="Mural R.J."/>
            <person name="Istrail S."/>
            <person name="Sutton G.G."/>
            <person name="Florea L."/>
            <person name="Halpern A.L."/>
            <person name="Mobarry C.M."/>
            <person name="Lippert R."/>
            <person name="Walenz B."/>
            <person name="Shatkay H."/>
            <person name="Dew I."/>
            <person name="Miller J.R."/>
            <person name="Flanigan M.J."/>
            <person name="Edwards N.J."/>
            <person name="Bolanos R."/>
            <person name="Fasulo D."/>
            <person name="Halldorsson B.V."/>
            <person name="Hannenhalli S."/>
            <person name="Turner R."/>
            <person name="Yooseph S."/>
            <person name="Lu F."/>
            <person name="Nusskern D.R."/>
            <person name="Shue B.C."/>
            <person name="Zheng X.H."/>
            <person name="Zhong F."/>
            <person name="Delcher A.L."/>
            <person name="Huson D.H."/>
            <person name="Kravitz S.A."/>
            <person name="Mouchard L."/>
            <person name="Reinert K."/>
            <person name="Remington K.A."/>
            <person name="Clark A.G."/>
            <person name="Waterman M.S."/>
            <person name="Eichler E.E."/>
            <person name="Adams M.D."/>
            <person name="Hunkapiller M.W."/>
            <person name="Myers E.W."/>
            <person name="Venter J.C."/>
        </authorList>
    </citation>
    <scope>NUCLEOTIDE SEQUENCE [LARGE SCALE GENOMIC DNA]</scope>
</reference>
<reference key="6">
    <citation type="journal article" date="2004" name="Genome Res.">
        <title>The status, quality, and expansion of the NIH full-length cDNA project: the Mammalian Gene Collection (MGC).</title>
        <authorList>
            <consortium name="The MGC Project Team"/>
        </authorList>
    </citation>
    <scope>NUCLEOTIDE SEQUENCE [LARGE SCALE MRNA] (ISOFORM 1)</scope>
    <source>
        <tissue>Brain</tissue>
    </source>
</reference>
<reference key="7">
    <citation type="journal article" date="1999" name="FEBS Lett.">
        <title>Ca2(+)-dependent interaction of N-copine, a member of the two C2 domain protein family, with OS-9, the product of a gene frequently amplified in osteosarcoma.</title>
        <authorList>
            <person name="Nakayama T."/>
            <person name="Yaoi T."/>
            <person name="Kuwajima G."/>
            <person name="Yoshie O."/>
            <person name="Sakata T."/>
        </authorList>
    </citation>
    <scope>TISSUE SPECIFICITY</scope>
</reference>
<reference key="8">
    <citation type="journal article" date="2002" name="Neuroscience">
        <title>NECABs: a family of neuronal Ca(2+)-binding proteins with an unusual domain structure and a restricted expression pattern.</title>
        <authorList>
            <person name="Sugita S."/>
            <person name="Ho A."/>
            <person name="Suedhof T.C."/>
        </authorList>
    </citation>
    <scope>INTERACTION WITH NECAB1</scope>
</reference>
<reference key="9">
    <citation type="journal article" date="2003" name="J. Leukoc. Biol.">
        <title>Tissue expression of copines and isolation of copines I and III from the cytosol of human neutrophils.</title>
        <authorList>
            <person name="Cowland J.B."/>
            <person name="Carter D."/>
            <person name="Bjerregaard M.D."/>
            <person name="Johnsen A.H."/>
            <person name="Borregaard N."/>
            <person name="Lollike K."/>
        </authorList>
    </citation>
    <scope>TISSUE SPECIFICITY</scope>
</reference>
<reference key="10">
    <citation type="journal article" date="2013" name="J. Dermatol. Sci.">
        <title>SYT14L, especially its C2 domain, is involved in regulating melanocyte differentiation.</title>
        <authorList>
            <person name="Yoo J.C."/>
            <person name="Lim T.Y."/>
            <person name="Park J.S."/>
            <person name="Hah Y.S."/>
            <person name="Park N."/>
            <person name="Hong S.G."/>
            <person name="Park J.Y."/>
            <person name="Yoon T.J."/>
        </authorList>
    </citation>
    <scope>FUNCTION</scope>
    <scope>TISSUE SPECIFICITY</scope>
</reference>
<name>CPNE6_HUMAN</name>